<name>DAAF1_PERLE</name>
<dbReference type="EMBL" id="EU836299">
    <property type="protein sequence ID" value="ACI22868.1"/>
    <property type="molecule type" value="mRNA"/>
</dbReference>
<dbReference type="SMR" id="B6D5P3"/>
<dbReference type="GO" id="GO:0005930">
    <property type="term" value="C:axoneme"/>
    <property type="evidence" value="ECO:0000250"/>
    <property type="project" value="UniProtKB"/>
</dbReference>
<dbReference type="GO" id="GO:0070840">
    <property type="term" value="F:dynein complex binding"/>
    <property type="evidence" value="ECO:0000250"/>
    <property type="project" value="UniProtKB"/>
</dbReference>
<dbReference type="GO" id="GO:0035082">
    <property type="term" value="P:axoneme assembly"/>
    <property type="evidence" value="ECO:0007669"/>
    <property type="project" value="TreeGrafter"/>
</dbReference>
<dbReference type="GO" id="GO:0060271">
    <property type="term" value="P:cilium assembly"/>
    <property type="evidence" value="ECO:0000250"/>
    <property type="project" value="UniProtKB"/>
</dbReference>
<dbReference type="FunFam" id="3.80.10.10:FF:000349">
    <property type="entry name" value="Dynein assembly factor 1, axonemal"/>
    <property type="match status" value="1"/>
</dbReference>
<dbReference type="FunFam" id="3.80.10.10:FF:000394">
    <property type="entry name" value="Dynein assembly factor 1, axonemal"/>
    <property type="match status" value="1"/>
</dbReference>
<dbReference type="Gene3D" id="3.80.10.10">
    <property type="entry name" value="Ribonuclease Inhibitor"/>
    <property type="match status" value="2"/>
</dbReference>
<dbReference type="InterPro" id="IPR050576">
    <property type="entry name" value="Cilia_flagella_integrity"/>
</dbReference>
<dbReference type="InterPro" id="IPR001611">
    <property type="entry name" value="Leu-rich_rpt"/>
</dbReference>
<dbReference type="InterPro" id="IPR032675">
    <property type="entry name" value="LRR_dom_sf"/>
</dbReference>
<dbReference type="PANTHER" id="PTHR45973:SF19">
    <property type="entry name" value="DYNEIN AXONEMAL ASSEMBLY FACTOR 1"/>
    <property type="match status" value="1"/>
</dbReference>
<dbReference type="PANTHER" id="PTHR45973">
    <property type="entry name" value="PROTEIN PHOSPHATASE 1 REGULATORY SUBUNIT SDS22-RELATED"/>
    <property type="match status" value="1"/>
</dbReference>
<dbReference type="Pfam" id="PF14580">
    <property type="entry name" value="LRR_9"/>
    <property type="match status" value="1"/>
</dbReference>
<dbReference type="SMART" id="SM00365">
    <property type="entry name" value="LRR_SD22"/>
    <property type="match status" value="3"/>
</dbReference>
<dbReference type="SUPFAM" id="SSF52075">
    <property type="entry name" value="Outer arm dynein light chain 1"/>
    <property type="match status" value="1"/>
</dbReference>
<dbReference type="PROSITE" id="PS51450">
    <property type="entry name" value="LRR"/>
    <property type="match status" value="6"/>
</dbReference>
<protein>
    <recommendedName>
        <fullName>Dynein axonemal assembly factor 1</fullName>
    </recommendedName>
    <alternativeName>
        <fullName>Leucine-rich repeat-containing protein 50</fullName>
    </alternativeName>
</protein>
<accession>B6D5P3</accession>
<keyword id="KW-0966">Cell projection</keyword>
<keyword id="KW-0969">Cilium</keyword>
<keyword id="KW-0433">Leucine-rich repeat</keyword>
<keyword id="KW-0597">Phosphoprotein</keyword>
<keyword id="KW-0677">Repeat</keyword>
<sequence length="622" mass="69351">MHPEVSEPQADGATEPSLEESAGDHGRAGPGVRKEEINETKETCVGPSTTSCQSQKQQSGDSRLDCRSGYARNDRDDRGPRMTKEFLQKLCKQHKLYITPALNDTLYLHFKGFDRIENLEEYTGLRCLWLECNGIQRIENLQAQSELRCLFLQVNLLHKIENLEPLQKLDALNLSNNYIKTIENLSCLPVLNTLQMAHNRLETVADIQHLRECLRLCVLDLSHNMLSDPEILSVLESMPCLRVLNLMGNPVTKHIPNYRRTVTVRLKQLTYLDDRPVFPKDRACAEAWARGGYAAEKEERLQWESREHKKITDSLEALAMIKRRAEERKKARDKGETPLPDSEESSSTSPEAQDKPPLGETQQKIEVFVEESFKVKDELFPEKPGGEEELAVVEDRTMEEPDLPGSLAQSQTLLVATAEESTSSVAATDGTGTEDTEAIALETKERLFIDDLPDLEDVDGMDMSMEDQTKEMGIPKIQVISSLSDDSDPELNDSPLPMLEHTPTGSTGVLSNIFAVCKDSSKAVRVPLTDICEPRATTELETQGQVFSTTPPRPLIQELEEDGRGENESKPSLPAQSSEDGDSQLPEATLLGDRAENEAQSSLDLGKPSPRASLEDIEFGLD</sequence>
<comment type="function">
    <text evidence="1">Cilium-specific protein required for the stability of the ciliary architecture. Plays a role in cytoplasmic preassembly of dynein arms (By similarity). Involved in regulation of microtubule-based cilia and actin-based brush border microvilli (By similarity).</text>
</comment>
<comment type="subcellular location">
    <subcellularLocation>
        <location evidence="1">Cell projection</location>
        <location evidence="1">Cilium</location>
    </subcellularLocation>
</comment>
<comment type="similarity">
    <text evidence="5">Belongs to the DNAAF1 family.</text>
</comment>
<feature type="chain" id="PRO_0000363931" description="Dynein axonemal assembly factor 1">
    <location>
        <begin position="1"/>
        <end position="622"/>
    </location>
</feature>
<feature type="repeat" description="LRR 1">
    <location>
        <begin position="101"/>
        <end position="123"/>
    </location>
</feature>
<feature type="repeat" description="LRR 2">
    <location>
        <begin position="124"/>
        <end position="145"/>
    </location>
</feature>
<feature type="repeat" description="LRR 3">
    <location>
        <begin position="146"/>
        <end position="167"/>
    </location>
</feature>
<feature type="repeat" description="LRR 4">
    <location>
        <begin position="168"/>
        <end position="189"/>
    </location>
</feature>
<feature type="repeat" description="LRR 5">
    <location>
        <begin position="190"/>
        <end position="211"/>
    </location>
</feature>
<feature type="repeat" description="LRR 6">
    <location>
        <begin position="215"/>
        <end position="236"/>
    </location>
</feature>
<feature type="domain" description="LRRCT">
    <location>
        <begin position="249"/>
        <end position="288"/>
    </location>
</feature>
<feature type="region of interest" description="Disordered" evidence="4">
    <location>
        <begin position="1"/>
        <end position="80"/>
    </location>
</feature>
<feature type="region of interest" description="Disordered" evidence="4">
    <location>
        <begin position="326"/>
        <end position="360"/>
    </location>
</feature>
<feature type="region of interest" description="Disordered" evidence="4">
    <location>
        <begin position="481"/>
        <end position="503"/>
    </location>
</feature>
<feature type="region of interest" description="Disordered" evidence="4">
    <location>
        <begin position="540"/>
        <end position="622"/>
    </location>
</feature>
<feature type="compositionally biased region" description="Basic and acidic residues" evidence="4">
    <location>
        <begin position="22"/>
        <end position="42"/>
    </location>
</feature>
<feature type="compositionally biased region" description="Low complexity" evidence="4">
    <location>
        <begin position="48"/>
        <end position="59"/>
    </location>
</feature>
<feature type="compositionally biased region" description="Basic and acidic residues" evidence="4">
    <location>
        <begin position="62"/>
        <end position="80"/>
    </location>
</feature>
<feature type="compositionally biased region" description="Basic and acidic residues" evidence="4">
    <location>
        <begin position="326"/>
        <end position="336"/>
    </location>
</feature>
<feature type="compositionally biased region" description="Low complexity" evidence="4">
    <location>
        <begin position="337"/>
        <end position="351"/>
    </location>
</feature>
<feature type="compositionally biased region" description="Polar residues" evidence="4">
    <location>
        <begin position="540"/>
        <end position="550"/>
    </location>
</feature>
<feature type="modified residue" description="Phosphoserine" evidence="2">
    <location>
        <position position="349"/>
    </location>
</feature>
<feature type="modified residue" description="Phosphoserine" evidence="3">
    <location>
        <position position="464"/>
    </location>
</feature>
<feature type="modified residue" description="Phosphoserine" evidence="3">
    <location>
        <position position="487"/>
    </location>
</feature>
<evidence type="ECO:0000250" key="1"/>
<evidence type="ECO:0000250" key="2">
    <source>
        <dbReference type="UniProtKB" id="Q6AYH9"/>
    </source>
</evidence>
<evidence type="ECO:0000250" key="3">
    <source>
        <dbReference type="UniProtKB" id="Q9D2H9"/>
    </source>
</evidence>
<evidence type="ECO:0000256" key="4">
    <source>
        <dbReference type="SAM" id="MobiDB-lite"/>
    </source>
</evidence>
<evidence type="ECO:0000305" key="5"/>
<organism>
    <name type="scientific">Peromyscus leucopus</name>
    <name type="common">White-footed mouse</name>
    <dbReference type="NCBI Taxonomy" id="10041"/>
    <lineage>
        <taxon>Eukaryota</taxon>
        <taxon>Metazoa</taxon>
        <taxon>Chordata</taxon>
        <taxon>Craniata</taxon>
        <taxon>Vertebrata</taxon>
        <taxon>Euteleostomi</taxon>
        <taxon>Mammalia</taxon>
        <taxon>Eutheria</taxon>
        <taxon>Euarchontoglires</taxon>
        <taxon>Glires</taxon>
        <taxon>Rodentia</taxon>
        <taxon>Myomorpha</taxon>
        <taxon>Muroidea</taxon>
        <taxon>Cricetidae</taxon>
        <taxon>Neotominae</taxon>
        <taxon>Peromyscus</taxon>
    </lineage>
</organism>
<gene>
    <name type="primary">Dnaaf1</name>
    <name type="synonym">Lrrc50</name>
</gene>
<proteinExistence type="evidence at transcript level"/>
<reference key="1">
    <citation type="journal article" date="2008" name="Genetics">
        <title>Comparative analysis of testis protein evolution in rodents.</title>
        <authorList>
            <person name="Turner L.M."/>
            <person name="Chuong E.B."/>
            <person name="Hoekstra H.E."/>
        </authorList>
    </citation>
    <scope>NUCLEOTIDE SEQUENCE [MRNA]</scope>
    <source>
        <strain>PGSC16</strain>
    </source>
</reference>